<dbReference type="EMBL" id="AC007190">
    <property type="protein sequence ID" value="AAF19552.1"/>
    <property type="status" value="ALT_SEQ"/>
    <property type="molecule type" value="Genomic_DNA"/>
</dbReference>
<dbReference type="EMBL" id="CP002684">
    <property type="protein sequence ID" value="AEE33993.1"/>
    <property type="molecule type" value="Genomic_DNA"/>
</dbReference>
<dbReference type="EMBL" id="CP002684">
    <property type="protein sequence ID" value="ANM60189.1"/>
    <property type="molecule type" value="Genomic_DNA"/>
</dbReference>
<dbReference type="EMBL" id="AK226633">
    <property type="protein sequence ID" value="BAE98744.1"/>
    <property type="molecule type" value="mRNA"/>
</dbReference>
<dbReference type="RefSeq" id="NP_001322491.1">
    <property type="nucleotide sequence ID" value="NM_001334048.1"/>
</dbReference>
<dbReference type="RefSeq" id="NP_176455.2">
    <property type="nucleotide sequence ID" value="NM_104945.3"/>
</dbReference>
<dbReference type="SMR" id="Q3ECK2"/>
<dbReference type="FunCoup" id="Q3ECK2">
    <property type="interactions" value="60"/>
</dbReference>
<dbReference type="PaxDb" id="3702-AT1G62680.1"/>
<dbReference type="ProteomicsDB" id="234800"/>
<dbReference type="EnsemblPlants" id="AT1G62680.1">
    <property type="protein sequence ID" value="AT1G62680.1"/>
    <property type="gene ID" value="AT1G62680"/>
</dbReference>
<dbReference type="EnsemblPlants" id="AT1G62680.2">
    <property type="protein sequence ID" value="AT1G62680.2"/>
    <property type="gene ID" value="AT1G62680"/>
</dbReference>
<dbReference type="GeneID" id="842565"/>
<dbReference type="Gramene" id="AT1G62680.1">
    <property type="protein sequence ID" value="AT1G62680.1"/>
    <property type="gene ID" value="AT1G62680"/>
</dbReference>
<dbReference type="Gramene" id="AT1G62680.2">
    <property type="protein sequence ID" value="AT1G62680.2"/>
    <property type="gene ID" value="AT1G62680"/>
</dbReference>
<dbReference type="KEGG" id="ath:AT1G62680"/>
<dbReference type="Araport" id="AT1G62680"/>
<dbReference type="TAIR" id="AT1G62680"/>
<dbReference type="eggNOG" id="KOG4197">
    <property type="taxonomic scope" value="Eukaryota"/>
</dbReference>
<dbReference type="HOGENOM" id="CLU_002706_49_0_1"/>
<dbReference type="InParanoid" id="Q3ECK2"/>
<dbReference type="OMA" id="SQMPVAR"/>
<dbReference type="PhylomeDB" id="Q3ECK2"/>
<dbReference type="PRO" id="PR:Q3ECK2"/>
<dbReference type="Proteomes" id="UP000006548">
    <property type="component" value="Chromosome 1"/>
</dbReference>
<dbReference type="ExpressionAtlas" id="Q3ECK2">
    <property type="expression patterns" value="baseline and differential"/>
</dbReference>
<dbReference type="GO" id="GO:0005739">
    <property type="term" value="C:mitochondrion"/>
    <property type="evidence" value="ECO:0007669"/>
    <property type="project" value="UniProtKB-SubCell"/>
</dbReference>
<dbReference type="FunFam" id="1.25.40.10:FF:000558">
    <property type="entry name" value="Pentatricopeptide repeat-containing protein At5g39710"/>
    <property type="match status" value="1"/>
</dbReference>
<dbReference type="Gene3D" id="1.25.40.10">
    <property type="entry name" value="Tetratricopeptide repeat domain"/>
    <property type="match status" value="4"/>
</dbReference>
<dbReference type="InterPro" id="IPR002885">
    <property type="entry name" value="Pentatricopeptide_rpt"/>
</dbReference>
<dbReference type="InterPro" id="IPR011990">
    <property type="entry name" value="TPR-like_helical_dom_sf"/>
</dbReference>
<dbReference type="NCBIfam" id="TIGR00756">
    <property type="entry name" value="PPR"/>
    <property type="match status" value="11"/>
</dbReference>
<dbReference type="PANTHER" id="PTHR47941">
    <property type="entry name" value="PENTATRICOPEPTIDE REPEAT-CONTAINING PROTEIN 3, MITOCHONDRIAL"/>
    <property type="match status" value="1"/>
</dbReference>
<dbReference type="Pfam" id="PF12854">
    <property type="entry name" value="PPR_1"/>
    <property type="match status" value="2"/>
</dbReference>
<dbReference type="Pfam" id="PF13041">
    <property type="entry name" value="PPR_2"/>
    <property type="match status" value="5"/>
</dbReference>
<dbReference type="SUPFAM" id="SSF48452">
    <property type="entry name" value="TPR-like"/>
    <property type="match status" value="1"/>
</dbReference>
<dbReference type="PROSITE" id="PS51375">
    <property type="entry name" value="PPR"/>
    <property type="match status" value="12"/>
</dbReference>
<reference key="1">
    <citation type="journal article" date="2000" name="Nature">
        <title>Sequence and analysis of chromosome 1 of the plant Arabidopsis thaliana.</title>
        <authorList>
            <person name="Theologis A."/>
            <person name="Ecker J.R."/>
            <person name="Palm C.J."/>
            <person name="Federspiel N.A."/>
            <person name="Kaul S."/>
            <person name="White O."/>
            <person name="Alonso J."/>
            <person name="Altafi H."/>
            <person name="Araujo R."/>
            <person name="Bowman C.L."/>
            <person name="Brooks S.Y."/>
            <person name="Buehler E."/>
            <person name="Chan A."/>
            <person name="Chao Q."/>
            <person name="Chen H."/>
            <person name="Cheuk R.F."/>
            <person name="Chin C.W."/>
            <person name="Chung M.K."/>
            <person name="Conn L."/>
            <person name="Conway A.B."/>
            <person name="Conway A.R."/>
            <person name="Creasy T.H."/>
            <person name="Dewar K."/>
            <person name="Dunn P."/>
            <person name="Etgu P."/>
            <person name="Feldblyum T.V."/>
            <person name="Feng J.-D."/>
            <person name="Fong B."/>
            <person name="Fujii C.Y."/>
            <person name="Gill J.E."/>
            <person name="Goldsmith A.D."/>
            <person name="Haas B."/>
            <person name="Hansen N.F."/>
            <person name="Hughes B."/>
            <person name="Huizar L."/>
            <person name="Hunter J.L."/>
            <person name="Jenkins J."/>
            <person name="Johnson-Hopson C."/>
            <person name="Khan S."/>
            <person name="Khaykin E."/>
            <person name="Kim C.J."/>
            <person name="Koo H.L."/>
            <person name="Kremenetskaia I."/>
            <person name="Kurtz D.B."/>
            <person name="Kwan A."/>
            <person name="Lam B."/>
            <person name="Langin-Hooper S."/>
            <person name="Lee A."/>
            <person name="Lee J.M."/>
            <person name="Lenz C.A."/>
            <person name="Li J.H."/>
            <person name="Li Y.-P."/>
            <person name="Lin X."/>
            <person name="Liu S.X."/>
            <person name="Liu Z.A."/>
            <person name="Luros J.S."/>
            <person name="Maiti R."/>
            <person name="Marziali A."/>
            <person name="Militscher J."/>
            <person name="Miranda M."/>
            <person name="Nguyen M."/>
            <person name="Nierman W.C."/>
            <person name="Osborne B.I."/>
            <person name="Pai G."/>
            <person name="Peterson J."/>
            <person name="Pham P.K."/>
            <person name="Rizzo M."/>
            <person name="Rooney T."/>
            <person name="Rowley D."/>
            <person name="Sakano H."/>
            <person name="Salzberg S.L."/>
            <person name="Schwartz J.R."/>
            <person name="Shinn P."/>
            <person name="Southwick A.M."/>
            <person name="Sun H."/>
            <person name="Tallon L.J."/>
            <person name="Tambunga G."/>
            <person name="Toriumi M.J."/>
            <person name="Town C.D."/>
            <person name="Utterback T."/>
            <person name="Van Aken S."/>
            <person name="Vaysberg M."/>
            <person name="Vysotskaia V.S."/>
            <person name="Walker M."/>
            <person name="Wu D."/>
            <person name="Yu G."/>
            <person name="Fraser C.M."/>
            <person name="Venter J.C."/>
            <person name="Davis R.W."/>
        </authorList>
    </citation>
    <scope>NUCLEOTIDE SEQUENCE [LARGE SCALE GENOMIC DNA]</scope>
    <source>
        <strain>cv. Columbia</strain>
    </source>
</reference>
<reference key="2">
    <citation type="journal article" date="2017" name="Plant J.">
        <title>Araport11: a complete reannotation of the Arabidopsis thaliana reference genome.</title>
        <authorList>
            <person name="Cheng C.Y."/>
            <person name="Krishnakumar V."/>
            <person name="Chan A.P."/>
            <person name="Thibaud-Nissen F."/>
            <person name="Schobel S."/>
            <person name="Town C.D."/>
        </authorList>
    </citation>
    <scope>GENOME REANNOTATION</scope>
    <source>
        <strain>cv. Columbia</strain>
    </source>
</reference>
<reference key="3">
    <citation type="submission" date="2006-07" db="EMBL/GenBank/DDBJ databases">
        <title>Large-scale analysis of RIKEN Arabidopsis full-length (RAFL) cDNAs.</title>
        <authorList>
            <person name="Totoki Y."/>
            <person name="Seki M."/>
            <person name="Ishida J."/>
            <person name="Nakajima M."/>
            <person name="Enju A."/>
            <person name="Kamiya A."/>
            <person name="Narusaka M."/>
            <person name="Shin-i T."/>
            <person name="Nakagawa M."/>
            <person name="Sakamoto N."/>
            <person name="Oishi K."/>
            <person name="Kohara Y."/>
            <person name="Kobayashi M."/>
            <person name="Toyoda A."/>
            <person name="Sakaki Y."/>
            <person name="Sakurai T."/>
            <person name="Iida K."/>
            <person name="Akiyama K."/>
            <person name="Satou M."/>
            <person name="Toyoda T."/>
            <person name="Konagaya A."/>
            <person name="Carninci P."/>
            <person name="Kawai J."/>
            <person name="Hayashizaki Y."/>
            <person name="Shinozaki K."/>
        </authorList>
    </citation>
    <scope>NUCLEOTIDE SEQUENCE [LARGE SCALE MRNA]</scope>
    <source>
        <strain>cv. Columbia</strain>
    </source>
</reference>
<reference key="4">
    <citation type="journal article" date="2004" name="Plant Cell">
        <title>Genome-wide analysis of Arabidopsis pentatricopeptide repeat proteins reveals their essential role in organelle biogenesis.</title>
        <authorList>
            <person name="Lurin C."/>
            <person name="Andres C."/>
            <person name="Aubourg S."/>
            <person name="Bellaoui M."/>
            <person name="Bitton F."/>
            <person name="Bruyere C."/>
            <person name="Caboche M."/>
            <person name="Debast C."/>
            <person name="Gualberto J."/>
            <person name="Hoffmann B."/>
            <person name="Lecharny A."/>
            <person name="Le Ret M."/>
            <person name="Martin-Magniette M.-L."/>
            <person name="Mireau H."/>
            <person name="Peeters N."/>
            <person name="Renou J.-P."/>
            <person name="Szurek B."/>
            <person name="Taconnat L."/>
            <person name="Small I."/>
        </authorList>
    </citation>
    <scope>GENE FAMILY</scope>
</reference>
<protein>
    <recommendedName>
        <fullName>Pentatricopeptide repeat-containing protein At1g62680, mitochondrial</fullName>
    </recommendedName>
</protein>
<evidence type="ECO:0000255" key="1"/>
<evidence type="ECO:0000305" key="2"/>
<name>PPR92_ARATH</name>
<comment type="subcellular location">
    <subcellularLocation>
        <location evidence="2">Mitochondrion</location>
    </subcellularLocation>
</comment>
<comment type="similarity">
    <text evidence="2">Belongs to the PPR family. P subfamily.</text>
</comment>
<comment type="sequence caution" evidence="2">
    <conflict type="erroneous gene model prediction">
        <sequence resource="EMBL-CDS" id="AAF19552"/>
    </conflict>
    <text>The predicted gene has been split into 2 genes: At1g62670 and At1g62680.</text>
</comment>
<comment type="online information" name="Pentatricopeptide repeat proteins">
    <link uri="https://ppr.plantenergy.uwa.edu.au"/>
</comment>
<proteinExistence type="evidence at transcript level"/>
<accession>Q3ECK2</accession>
<accession>Q0WVV4</accession>
<accession>Q9SI82</accession>
<sequence length="548" mass="61449">MQRSIAMTAKRFLHRNLLENGKPRTASSPSFSHCSSCRCWVRASSSVSGGDLRERLSKTRLRDIKLNDAIDLFSDMVKSRPFPSIVDFNRLLSAIVKLKKYDVVISLGKKMEVLGIRNDLYTFNIVINCFCCCFQVSLALSILGKMLKLGYEPDRVTIGSLVNGFCRRNRVSDAVSLVDKMVEIGYKPDIVAYNAIIDSLCKTKRVNDAFDFFKEIERKGIRPNVVTYTALVNGLCNSSRWSDAARLLSDMIKKKITPNVITYSALLDAFVKNGKVLEAKELFEEMVRMSIDPDIVTYSSLINGLCLHDRIDEANQMFDLMVSKGCLADVVSYNTLINGFCKAKRVEDGMKLFREMSQRGLVSNTVTYNTLIQGFFQAGDVDKAQEFFSQMDFFGISPDIWTYNILLGGLCDNGELEKALVIFEDMQKREMDLDIVTYTTVIRGMCKTGKVEEAWSLFCSLSLKGLKPDIVTYTTMMSGLCTKGLLHEVEALYTKMKQEGLMKNDCTLSDGDITLSAELIKKMLSCGYAPSLLKDIKSGVCKKALSLL</sequence>
<organism>
    <name type="scientific">Arabidopsis thaliana</name>
    <name type="common">Mouse-ear cress</name>
    <dbReference type="NCBI Taxonomy" id="3702"/>
    <lineage>
        <taxon>Eukaryota</taxon>
        <taxon>Viridiplantae</taxon>
        <taxon>Streptophyta</taxon>
        <taxon>Embryophyta</taxon>
        <taxon>Tracheophyta</taxon>
        <taxon>Spermatophyta</taxon>
        <taxon>Magnoliopsida</taxon>
        <taxon>eudicotyledons</taxon>
        <taxon>Gunneridae</taxon>
        <taxon>Pentapetalae</taxon>
        <taxon>rosids</taxon>
        <taxon>malvids</taxon>
        <taxon>Brassicales</taxon>
        <taxon>Brassicaceae</taxon>
        <taxon>Camelineae</taxon>
        <taxon>Arabidopsis</taxon>
    </lineage>
</organism>
<keyword id="KW-0496">Mitochondrion</keyword>
<keyword id="KW-1185">Reference proteome</keyword>
<keyword id="KW-0677">Repeat</keyword>
<keyword id="KW-0809">Transit peptide</keyword>
<feature type="transit peptide" description="Mitochondrion" evidence="1">
    <location>
        <begin position="1"/>
        <end position="43"/>
    </location>
</feature>
<feature type="chain" id="PRO_0000342833" description="Pentatricopeptide repeat-containing protein At1g62680, mitochondrial">
    <location>
        <begin position="44"/>
        <end position="548"/>
    </location>
</feature>
<feature type="repeat" description="PPR 1">
    <location>
        <begin position="84"/>
        <end position="118"/>
    </location>
</feature>
<feature type="repeat" description="PPR 2">
    <location>
        <begin position="119"/>
        <end position="153"/>
    </location>
</feature>
<feature type="repeat" description="PPR 3">
    <location>
        <begin position="154"/>
        <end position="188"/>
    </location>
</feature>
<feature type="repeat" description="PPR 4">
    <location>
        <begin position="189"/>
        <end position="223"/>
    </location>
</feature>
<feature type="repeat" description="PPR 5">
    <location>
        <begin position="224"/>
        <end position="258"/>
    </location>
</feature>
<feature type="repeat" description="PPR 6">
    <location>
        <begin position="259"/>
        <end position="293"/>
    </location>
</feature>
<feature type="repeat" description="PPR 7">
    <location>
        <begin position="294"/>
        <end position="328"/>
    </location>
</feature>
<feature type="repeat" description="PPR 8">
    <location>
        <begin position="329"/>
        <end position="363"/>
    </location>
</feature>
<feature type="repeat" description="PPR 9">
    <location>
        <begin position="364"/>
        <end position="398"/>
    </location>
</feature>
<feature type="repeat" description="PPR 10">
    <location>
        <begin position="399"/>
        <end position="433"/>
    </location>
</feature>
<feature type="repeat" description="PPR 11">
    <location>
        <begin position="434"/>
        <end position="468"/>
    </location>
</feature>
<feature type="repeat" description="PPR 12">
    <location>
        <begin position="469"/>
        <end position="503"/>
    </location>
</feature>
<feature type="sequence conflict" description="In Ref. 3; BAE98744." evidence="2" ref="3">
    <original>I</original>
    <variation>V</variation>
    <location>
        <position position="302"/>
    </location>
</feature>
<gene>
    <name type="ordered locus">At1g62680</name>
    <name type="ORF">F23N19.22</name>
</gene>